<accession>P50361</accession>
<keyword id="KW-0614">Plasmid</keyword>
<keyword id="KW-1185">Reference proteome</keyword>
<feature type="chain" id="PRO_0000200854" description="Uncharacterized protein y4hQ">
    <location>
        <begin position="1"/>
        <end position="194"/>
    </location>
</feature>
<feature type="sequence conflict" description="In Ref. 3; CAA52198." evidence="1" ref="3">
    <original>I</original>
    <variation>M</variation>
    <location>
        <position position="18"/>
    </location>
</feature>
<feature type="sequence conflict" description="In Ref. 3; CAA52198." evidence="1" ref="3">
    <original>R</original>
    <variation>S</variation>
    <location>
        <position position="30"/>
    </location>
</feature>
<sequence>MVASVVRLKVTLDHVEPIVMRRVVVPFTIRLSRLHEVLQAAMGWTNSHLYEFRMRDVGFGLPDEEWGDGPIDARRVSLLSAVQDTGAKSFKYLYDFGDGWEHSIKIERTFPAVGTEGPMLLEATGHCPPEDVGGPWGYQEFCEALADPAHERHAETLEWCGSSDYDSAAANFSQLNKAVDDLAAKWARKARRKT</sequence>
<gene>
    <name type="ordered locus">NGR_a03330</name>
    <name type="ORF">y4hQ</name>
</gene>
<proteinExistence type="predicted"/>
<protein>
    <recommendedName>
        <fullName>Uncharacterized protein y4hQ</fullName>
    </recommendedName>
</protein>
<name>Y4HQ_SINFN</name>
<evidence type="ECO:0000305" key="1"/>
<dbReference type="EMBL" id="U00090">
    <property type="protein sequence ID" value="AAB92455.1"/>
    <property type="molecule type" value="Genomic_DNA"/>
</dbReference>
<dbReference type="EMBL" id="X74068">
    <property type="protein sequence ID" value="CAA52198.1"/>
    <property type="status" value="ALT_INIT"/>
    <property type="molecule type" value="Genomic_DNA"/>
</dbReference>
<dbReference type="PIR" id="T10851">
    <property type="entry name" value="T10851"/>
</dbReference>
<dbReference type="RefSeq" id="NP_443893.1">
    <property type="nucleotide sequence ID" value="NC_000914.2"/>
</dbReference>
<dbReference type="RefSeq" id="WP_010875347.1">
    <property type="nucleotide sequence ID" value="NC_000914.2"/>
</dbReference>
<dbReference type="SMR" id="P50361"/>
<dbReference type="STRING" id="394.NGR_c17710"/>
<dbReference type="KEGG" id="rhi:NGR_a03330"/>
<dbReference type="PATRIC" id="fig|394.7.peg.342"/>
<dbReference type="eggNOG" id="COG3012">
    <property type="taxonomic scope" value="Bacteria"/>
</dbReference>
<dbReference type="HOGENOM" id="CLU_085055_3_0_5"/>
<dbReference type="OrthoDB" id="9816539at2"/>
<dbReference type="Proteomes" id="UP000001054">
    <property type="component" value="Plasmid pNGR234a"/>
</dbReference>
<dbReference type="Gene3D" id="3.10.290.30">
    <property type="entry name" value="MM3350-like"/>
    <property type="match status" value="1"/>
</dbReference>
<dbReference type="InterPro" id="IPR024047">
    <property type="entry name" value="MM3350-like_sf"/>
</dbReference>
<dbReference type="InterPro" id="IPR012912">
    <property type="entry name" value="Plasmid_pRiA4b_Orf3-like"/>
</dbReference>
<dbReference type="PANTHER" id="PTHR41878">
    <property type="entry name" value="LEXA REPRESSOR-RELATED"/>
    <property type="match status" value="1"/>
</dbReference>
<dbReference type="PANTHER" id="PTHR41878:SF1">
    <property type="entry name" value="TNPR PROTEIN"/>
    <property type="match status" value="1"/>
</dbReference>
<dbReference type="Pfam" id="PF07929">
    <property type="entry name" value="PRiA4_ORF3"/>
    <property type="match status" value="1"/>
</dbReference>
<dbReference type="SUPFAM" id="SSF159941">
    <property type="entry name" value="MM3350-like"/>
    <property type="match status" value="1"/>
</dbReference>
<reference key="1">
    <citation type="journal article" date="1997" name="Nature">
        <title>Molecular basis of symbiosis between Rhizobium and legumes.</title>
        <authorList>
            <person name="Freiberg C.A."/>
            <person name="Fellay R."/>
            <person name="Bairoch A."/>
            <person name="Broughton W.J."/>
            <person name="Rosenthal A."/>
            <person name="Perret X."/>
        </authorList>
    </citation>
    <scope>NUCLEOTIDE SEQUENCE [LARGE SCALE GENOMIC DNA]</scope>
    <source>
        <strain>NBRC 101917 / NGR234</strain>
    </source>
</reference>
<reference key="2">
    <citation type="journal article" date="2009" name="Appl. Environ. Microbiol.">
        <title>Rhizobium sp. strain NGR234 possesses a remarkable number of secretion systems.</title>
        <authorList>
            <person name="Schmeisser C."/>
            <person name="Liesegang H."/>
            <person name="Krysciak D."/>
            <person name="Bakkou N."/>
            <person name="Le Quere A."/>
            <person name="Wollherr A."/>
            <person name="Heinemeyer I."/>
            <person name="Morgenstern B."/>
            <person name="Pommerening-Roeser A."/>
            <person name="Flores M."/>
            <person name="Palacios R."/>
            <person name="Brenner S."/>
            <person name="Gottschalk G."/>
            <person name="Schmitz R.A."/>
            <person name="Broughton W.J."/>
            <person name="Perret X."/>
            <person name="Strittmatter A.W."/>
            <person name="Streit W.R."/>
        </authorList>
    </citation>
    <scope>NUCLEOTIDE SEQUENCE [LARGE SCALE GENOMIC DNA]</scope>
    <source>
        <strain>NBRC 101917 / NGR234</strain>
    </source>
</reference>
<reference key="3">
    <citation type="submission" date="1993-07" db="EMBL/GenBank/DDBJ databases">
        <authorList>
            <person name="Rochepeau P."/>
            <person name="Fellay R."/>
            <person name="Broughton W.J."/>
        </authorList>
    </citation>
    <scope>NUCLEOTIDE SEQUENCE [GENOMIC DNA] OF 1-52</scope>
</reference>
<geneLocation type="plasmid">
    <name>sym pNGR234a</name>
</geneLocation>
<comment type="similarity">
    <text evidence="1">To A.rhizogenes plasmid pRia4B ORF-3 in virA region.</text>
</comment>
<comment type="sequence caution" evidence="1">
    <conflict type="erroneous initiation">
        <sequence resource="EMBL-CDS" id="CAA52198"/>
    </conflict>
</comment>
<organism>
    <name type="scientific">Sinorhizobium fredii (strain NBRC 101917 / NGR234)</name>
    <dbReference type="NCBI Taxonomy" id="394"/>
    <lineage>
        <taxon>Bacteria</taxon>
        <taxon>Pseudomonadati</taxon>
        <taxon>Pseudomonadota</taxon>
        <taxon>Alphaproteobacteria</taxon>
        <taxon>Hyphomicrobiales</taxon>
        <taxon>Rhizobiaceae</taxon>
        <taxon>Sinorhizobium/Ensifer group</taxon>
        <taxon>Sinorhizobium</taxon>
    </lineage>
</organism>